<gene>
    <name evidence="11" type="primary">PSE1</name>
    <name evidence="12" type="synonym">KAP121</name>
    <name evidence="15" type="ordered locus">YMR308C</name>
    <name type="ORF">YM9952.10C</name>
</gene>
<proteinExistence type="evidence at protein level"/>
<evidence type="ECO:0000269" key="1">
    <source>
    </source>
</evidence>
<evidence type="ECO:0000269" key="2">
    <source>
    </source>
</evidence>
<evidence type="ECO:0000269" key="3">
    <source>
    </source>
</evidence>
<evidence type="ECO:0000269" key="4">
    <source>
    </source>
</evidence>
<evidence type="ECO:0000269" key="5">
    <source>
    </source>
</evidence>
<evidence type="ECO:0000269" key="6">
    <source>
    </source>
</evidence>
<evidence type="ECO:0000269" key="7">
    <source>
    </source>
</evidence>
<evidence type="ECO:0000269" key="8">
    <source>
    </source>
</evidence>
<evidence type="ECO:0000269" key="9">
    <source>
    </source>
</evidence>
<evidence type="ECO:0000269" key="10">
    <source>
    </source>
</evidence>
<evidence type="ECO:0000303" key="11">
    <source>
    </source>
</evidence>
<evidence type="ECO:0000303" key="12">
    <source>
    </source>
</evidence>
<evidence type="ECO:0000305" key="13"/>
<evidence type="ECO:0000305" key="14">
    <source>
    </source>
</evidence>
<evidence type="ECO:0000312" key="15">
    <source>
        <dbReference type="SGD" id="S000004925"/>
    </source>
</evidence>
<evidence type="ECO:0007744" key="16">
    <source>
    </source>
</evidence>
<evidence type="ECO:0007744" key="17">
    <source>
    </source>
</evidence>
<evidence type="ECO:0007829" key="18">
    <source>
        <dbReference type="PDB" id="3W3U"/>
    </source>
</evidence>
<evidence type="ECO:0007829" key="19">
    <source>
        <dbReference type="PDB" id="3W3W"/>
    </source>
</evidence>
<evidence type="ECO:0007829" key="20">
    <source>
        <dbReference type="PDB" id="4ZJ7"/>
    </source>
</evidence>
<evidence type="ECO:0007829" key="21">
    <source>
        <dbReference type="PDB" id="5H2V"/>
    </source>
</evidence>
<name>IMB3_YEAST</name>
<protein>
    <recommendedName>
        <fullName evidence="13">Importin subunit beta-3</fullName>
    </recommendedName>
    <alternativeName>
        <fullName evidence="13">Karyopherin subunit beta-3</fullName>
    </alternativeName>
    <alternativeName>
        <fullName evidence="12">Karyopherin-121</fullName>
    </alternativeName>
    <alternativeName>
        <fullName evidence="11">Protein secretion enhancer 1</fullName>
    </alternativeName>
</protein>
<comment type="function">
    <text evidence="1 2 5 8 10 14">Functions in nuclear protein import as nuclear transport receptor. Serves as receptor for classical and arginine/glycine-rich nuclear localization signals (cNLS and rg-NLS) in cargo substrates (PubMed:15367670). Its predominant cargo substrate seems to be ribosomal proteins and ribosome biogenesis trans- and cis-acting factors (PubMed:15367670, PubMed:9182759, PubMed:9321403). Required for nuclear transport of YAP1, NOP1 and SOF1 (PubMed:11274141, PubMed:15367670). Mediates the nuclear import of histones H3 and H4 (PubMed:11694505). Mediates docking of the importin/substrate complex to the nuclear pore complex (NPC) through binding to repeat-containing nucleoporins. The complex is subsequently translocated through the pore by an energy requiring, Ran-dependent mechanism (PubMed:11423015). At the nucleoplasmic side of the NPC, GTP-Ran binding leads to release of the cargo (PubMed:9321403). The importin is re-exported from the nucleus to the cytoplasm where GTP hydrolysis releases Ran from importin. The directionality of nuclear import is thought to be conferred by an asymmetric distribution of the GTP- and GDP-bound forms of Ran between the cytoplasm and nucleus (PubMed:11423015).</text>
</comment>
<comment type="function">
    <text evidence="4">Plays a role in protein secretion.</text>
</comment>
<comment type="subunit">
    <text evidence="1 2 6 10">Interacts with Ran (GSP1); interacts specifically with the GTP-bound form of Ran (GTP-Ran), protecting it from GTP hydrolysis and nucleotide exchange (PubMed:9321403). Interacts with RPL25; this interaction is dissociated by binding to Ran-GTP (PubMed:9321403). Interacts with YAP1; this interaction is dissociated by binding to Ran-GTP (PubMed:11274141). Interacts with NOP1; via its rg-NLS (PubMed:15367670). Interacts with SOF1; via its cNLS (PubMed:15367670). Interacts with histones H3 and H4; via their NLS (PubMed:11694505). Interacts with ABF1 (PubMed:15522095).</text>
</comment>
<comment type="subcellular location">
    <subcellularLocation>
        <location evidence="9">Cytoplasm</location>
    </subcellularLocation>
    <subcellularLocation>
        <location evidence="9">Nucleus</location>
    </subcellularLocation>
</comment>
<comment type="miscellaneous">
    <text evidence="3">Present with 15500 molecules/cell in log phase SD medium.</text>
</comment>
<comment type="similarity">
    <text evidence="13">Belongs to the importin beta family. Importin beta-3 subfamily.</text>
</comment>
<reference key="1">
    <citation type="journal article" date="1992" name="J. Cell Sci.">
        <title>Screening and identification of a gene, PSE-1, that affects protein secretion in Saccharomyces cerevisiae.</title>
        <authorList>
            <person name="Chow T.Y.-K."/>
            <person name="Ash J.J."/>
            <person name="Dignard D."/>
            <person name="Thomas D.Y."/>
        </authorList>
    </citation>
    <scope>NUCLEOTIDE SEQUENCE [GENOMIC DNA]</scope>
    <scope>FUNCTION</scope>
</reference>
<reference key="2">
    <citation type="journal article" date="1997" name="Nature">
        <title>The nucleotide sequence of Saccharomyces cerevisiae chromosome XIII.</title>
        <authorList>
            <person name="Bowman S."/>
            <person name="Churcher C.M."/>
            <person name="Badcock K."/>
            <person name="Brown D."/>
            <person name="Chillingworth T."/>
            <person name="Connor R."/>
            <person name="Dedman K."/>
            <person name="Devlin K."/>
            <person name="Gentles S."/>
            <person name="Hamlin N."/>
            <person name="Hunt S."/>
            <person name="Jagels K."/>
            <person name="Lye G."/>
            <person name="Moule S."/>
            <person name="Odell C."/>
            <person name="Pearson D."/>
            <person name="Rajandream M.A."/>
            <person name="Rice P."/>
            <person name="Skelton J."/>
            <person name="Walsh S.V."/>
            <person name="Whitehead S."/>
            <person name="Barrell B.G."/>
        </authorList>
    </citation>
    <scope>NUCLEOTIDE SEQUENCE [LARGE SCALE GENOMIC DNA]</scope>
    <source>
        <strain>ATCC 204508 / S288c</strain>
    </source>
</reference>
<reference key="3">
    <citation type="journal article" date="2014" name="G3 (Bethesda)">
        <title>The reference genome sequence of Saccharomyces cerevisiae: Then and now.</title>
        <authorList>
            <person name="Engel S.R."/>
            <person name="Dietrich F.S."/>
            <person name="Fisk D.G."/>
            <person name="Binkley G."/>
            <person name="Balakrishnan R."/>
            <person name="Costanzo M.C."/>
            <person name="Dwight S.S."/>
            <person name="Hitz B.C."/>
            <person name="Karra K."/>
            <person name="Nash R.S."/>
            <person name="Weng S."/>
            <person name="Wong E.D."/>
            <person name="Lloyd P."/>
            <person name="Skrzypek M.S."/>
            <person name="Miyasato S.R."/>
            <person name="Simison M."/>
            <person name="Cherry J.M."/>
        </authorList>
    </citation>
    <scope>GENOME REANNOTATION</scope>
    <source>
        <strain>ATCC 204508 / S288c</strain>
    </source>
</reference>
<reference key="4">
    <citation type="journal article" date="1997" name="Cell">
        <title>A distinct nuclear import pathway used by ribosomal proteins.</title>
        <authorList>
            <person name="Rout M.P."/>
            <person name="Blobel G."/>
            <person name="Aitchison J.D."/>
        </authorList>
    </citation>
    <scope>FUNCTION</scope>
</reference>
<reference key="5">
    <citation type="journal article" date="1997" name="EMBO J.">
        <title>Yrb4p, a yeast ran-GTP-binding protein involved in import of ribosomal protein L25 into the nucleus.</title>
        <authorList>
            <person name="Schlenstedt G."/>
            <person name="Smirnova E."/>
            <person name="Deane R."/>
            <person name="Solsbacher J."/>
            <person name="Kutay U."/>
            <person name="Goerlich D."/>
            <person name="Ponstingl H."/>
            <person name="Bischoff F.R."/>
        </authorList>
    </citation>
    <scope>FUNCTION</scope>
    <scope>INTERACTION WITH GSP1 AND RPL25</scope>
</reference>
<reference key="6">
    <citation type="journal article" date="1997" name="Proc. Natl. Acad. Sci. U.S.A.">
        <title>Importin/karyopherin protein family members required for mRNA export from the nucleus.</title>
        <authorList>
            <person name="Seedorf M."/>
            <person name="Silver P.A."/>
        </authorList>
    </citation>
    <scope>SUBCELLULAR LOCATION</scope>
</reference>
<reference key="7">
    <citation type="journal article" date="2001" name="Genome Biol.">
        <title>Importin-beta-like nuclear transport receptors.</title>
        <authorList>
            <person name="Stroem A.C."/>
            <person name="Weis K."/>
        </authorList>
    </citation>
    <scope>REVIEW</scope>
</reference>
<reference key="8">
    <citation type="journal article" date="2001" name="J. Biol. Chem.">
        <title>Nuclear import of the yeast AP-1-like transcription factor Yap1p is mediated by transport receptor Pse1p, and this import step is not affected by oxidative stress.</title>
        <authorList>
            <person name="Isoyama T."/>
            <person name="Murayama A."/>
            <person name="Nomoto A."/>
            <person name="Kuge S."/>
        </authorList>
    </citation>
    <scope>FUNCTION</scope>
    <scope>INTERACTION WITH YAP1</scope>
</reference>
<reference key="9">
    <citation type="journal article" date="2002" name="J. Biol. Chem.">
        <title>Pathways mediating the nuclear import of histones H3 and H4 in yeast.</title>
        <authorList>
            <person name="Mosammaparast N."/>
            <person name="Guo Y."/>
            <person name="Shabanowitz J."/>
            <person name="Hunt D.F."/>
            <person name="Pemberton L.F."/>
        </authorList>
    </citation>
    <scope>FUNCTION</scope>
    <scope>INTERACTION WITH HISTONES H3 AND H4</scope>
</reference>
<reference key="10">
    <citation type="journal article" date="2003" name="Nature">
        <title>Global analysis of protein expression in yeast.</title>
        <authorList>
            <person name="Ghaemmaghami S."/>
            <person name="Huh W.-K."/>
            <person name="Bower K."/>
            <person name="Howson R.W."/>
            <person name="Belle A."/>
            <person name="Dephoure N."/>
            <person name="O'Shea E.K."/>
            <person name="Weissman J.S."/>
        </authorList>
    </citation>
    <scope>LEVEL OF PROTEIN EXPRESSION [LARGE SCALE ANALYSIS]</scope>
</reference>
<reference key="11">
    <citation type="journal article" date="2004" name="Mol. Cell. Biol.">
        <title>Characterization of karyopherin cargoes reveals unique mechanisms of Kap121p-mediated nuclear import.</title>
        <authorList>
            <person name="Leslie D.M."/>
            <person name="Zhang W."/>
            <person name="Timney B.L."/>
            <person name="Chait B.T."/>
            <person name="Rout M.P."/>
            <person name="Wozniak R.W."/>
            <person name="Aitchison J.D."/>
        </authorList>
    </citation>
    <scope>FUNCTION</scope>
    <scope>INTERACTION WITH NOP1 AND SOF1</scope>
</reference>
<reference key="12">
    <citation type="journal article" date="2004" name="Traffic">
        <title>Functional and physical interactions between autonomously replicating sequence-binding factor 1 and the nuclear transport machinery.</title>
        <authorList>
            <person name="Loch C.M."/>
            <person name="Mosammaparast N."/>
            <person name="Miyake T."/>
            <person name="Pemberton L.F."/>
            <person name="Li R."/>
        </authorList>
    </citation>
    <scope>INTERACTION WITH ABF1</scope>
</reference>
<reference key="13">
    <citation type="journal article" date="2009" name="Science">
        <title>Global analysis of Cdk1 substrate phosphorylation sites provides insights into evolution.</title>
        <authorList>
            <person name="Holt L.J."/>
            <person name="Tuch B.B."/>
            <person name="Villen J."/>
            <person name="Johnson A.D."/>
            <person name="Gygi S.P."/>
            <person name="Morgan D.O."/>
        </authorList>
    </citation>
    <scope>PHOSPHORYLATION [LARGE SCALE ANALYSIS] AT THR-830</scope>
    <scope>IDENTIFICATION BY MASS SPECTROMETRY [LARGE SCALE ANALYSIS]</scope>
</reference>
<reference key="14">
    <citation type="journal article" date="2012" name="Proc. Natl. Acad. Sci. U.S.A.">
        <title>N-terminal acetylome analyses and functional insights of the N-terminal acetyltransferase NatB.</title>
        <authorList>
            <person name="Van Damme P."/>
            <person name="Lasa M."/>
            <person name="Polevoda B."/>
            <person name="Gazquez C."/>
            <person name="Elosegui-Artola A."/>
            <person name="Kim D.S."/>
            <person name="De Juan-Pardo E."/>
            <person name="Demeyer K."/>
            <person name="Hole K."/>
            <person name="Larrea E."/>
            <person name="Timmerman E."/>
            <person name="Prieto J."/>
            <person name="Arnesen T."/>
            <person name="Sherman F."/>
            <person name="Gevaert K."/>
            <person name="Aldabe R."/>
        </authorList>
    </citation>
    <scope>ACETYLATION [LARGE SCALE ANALYSIS] AT SER-2</scope>
    <scope>CLEAVAGE OF INITIATOR METHIONINE [LARGE SCALE ANALYSIS]</scope>
    <scope>IDENTIFICATION BY MASS SPECTROMETRY [LARGE SCALE ANALYSIS]</scope>
</reference>
<reference key="15">
    <citation type="journal article" date="2013" name="J. Mol. Biol.">
        <title>Structural basis for cell-cycle-dependent nuclear import mediated by the karyopherin Kap121p.</title>
        <authorList>
            <person name="Kobayashi J."/>
            <person name="Matsuura Y."/>
        </authorList>
    </citation>
    <scope>X-RAY CRYSTALLOGRAPHY (2.20 ANGSTROMS) OF 1-1089 IN COMPLEXES WITH STE11; PHO4; NUP53 AND GSP1</scope>
    <scope>REPEAT STRUCTURE</scope>
</reference>
<accession>P32337</accession>
<accession>D6W0D5</accession>
<organism>
    <name type="scientific">Saccharomyces cerevisiae (strain ATCC 204508 / S288c)</name>
    <name type="common">Baker's yeast</name>
    <dbReference type="NCBI Taxonomy" id="559292"/>
    <lineage>
        <taxon>Eukaryota</taxon>
        <taxon>Fungi</taxon>
        <taxon>Dikarya</taxon>
        <taxon>Ascomycota</taxon>
        <taxon>Saccharomycotina</taxon>
        <taxon>Saccharomycetes</taxon>
        <taxon>Saccharomycetales</taxon>
        <taxon>Saccharomycetaceae</taxon>
        <taxon>Saccharomyces</taxon>
    </lineage>
</organism>
<keyword id="KW-0002">3D-structure</keyword>
<keyword id="KW-0007">Acetylation</keyword>
<keyword id="KW-0963">Cytoplasm</keyword>
<keyword id="KW-0539">Nucleus</keyword>
<keyword id="KW-0597">Phosphoprotein</keyword>
<keyword id="KW-0653">Protein transport</keyword>
<keyword id="KW-1185">Reference proteome</keyword>
<keyword id="KW-0677">Repeat</keyword>
<keyword id="KW-0813">Transport</keyword>
<sequence>MSALPEEVNRTLLQIVQAFASPDNQIRSVAEKALSEEWITENNIEYLLTFLAEQAAFSQDTTVAALSAVLFRKLALKAPPSSKLMIMSKNITHIRKEVLAQIRSSLLKGFLSERADSIRHKLSDAIAECVQDDLPAWPELLQALIESLKSGNPNFRESSFRILTTVPYLITAVDINSILPIFQSGFTDASDNVKIAAVTAFVGYFKQLPKSEWSKLGILLPSLLNSLPRFLDDGKDDALASVFESLIELVELAPKLFKDMFDQIIQFTDMVIKNKDLEPPARTTALELLTVFSENAPQMCKSNQNYGQTLVMVTLIMMTEVSIDDDDAAEWIESDDTDDEEEVTYDHARQALDRVALKLGGEYLAAPLFQYLQQMITSTEWRERFAAMMALSSAAEGCADVLIGEIPKILDMVIPLINDPHPRVQYGCCNVLGQISTDFSPFIQRTAHDRILPALISKLTSECTSRVQTHAAAALVNFSEFASKDILEPYLDSLLTNLLVLLQSNKLYVQEQALTTIAFIAEAAKNKFIKYYDTLMPLLLNVLKVNNKDNSVLKGKCMECATLIGFAVGKEKFHEHSQELISILVALQNSDIDEDDALRSYLEQSWSRICRILGDDFVPLLPIVIPPLLITAKATQDVGLIEEEEAANFQQYPDWDVVQVQGKHIAIHTSVLDDKVSAMELLQSYATLLRGQFAVYVKEVMEEIALPSLDFYLHDGVRAAGATLIPILLSCLLAATGTQNEELVLLWHKASSKLIGGLMSEPMPEITQVYHNSLVNGIKVMGDNCLSEDQLAAFTKGVSANLTDTYERMQDRHGDGDEYNENIDEEEDFTDEDLLDEINKSIAAVLKTTNGHYLKNLENIWPMINTFLLDNEPILVIFALVVIGDLIQYGGEQTASMKNAFIPKVTECLISPDARIRQAASYIIGVCAQYAPSTYADVCIPTLDTLVQIVDFPGSKLEENRSSTENASAAIAKILYAYNSNIPNVDTYTANWFKTLPTITDKEAASFNYQFLSQLIENNSPIVCAQSNISAVVDSVIQALNERSLTEREGQTVISSVKKLLGFLPSSDAMAIFNRYPADIMEKVHKWFA</sequence>
<feature type="initiator methionine" description="Removed" evidence="17">
    <location>
        <position position="1"/>
    </location>
</feature>
<feature type="chain" id="PRO_0000120774" description="Importin subunit beta-3">
    <location>
        <begin position="2"/>
        <end position="1089"/>
    </location>
</feature>
<feature type="repeat" description="HEAT 1" evidence="7">
    <location>
        <begin position="6"/>
        <end position="39"/>
    </location>
</feature>
<feature type="repeat" description="HEAT 2" evidence="7">
    <location>
        <begin position="44"/>
        <end position="78"/>
    </location>
</feature>
<feature type="repeat" description="HEAT 3" evidence="7">
    <location>
        <begin position="96"/>
        <end position="129"/>
    </location>
</feature>
<feature type="repeat" description="HEAT 4" evidence="7">
    <location>
        <begin position="138"/>
        <end position="165"/>
    </location>
</feature>
<feature type="repeat" description="HEAT 5" evidence="7">
    <location>
        <begin position="175"/>
        <end position="207"/>
    </location>
</feature>
<feature type="repeat" description="HEAT 6" evidence="7">
    <location>
        <begin position="216"/>
        <end position="252"/>
    </location>
</feature>
<feature type="repeat" description="HEAT 7" evidence="7">
    <location>
        <begin position="260"/>
        <end position="295"/>
    </location>
</feature>
<feature type="repeat" description="HEAT 8" evidence="7">
    <location>
        <begin position="304"/>
        <end position="359"/>
    </location>
</feature>
<feature type="repeat" description="HEAT 9" evidence="7">
    <location>
        <begin position="361"/>
        <end position="395"/>
    </location>
</feature>
<feature type="repeat" description="HEAT 10" evidence="7">
    <location>
        <begin position="399"/>
        <end position="439"/>
    </location>
</feature>
<feature type="repeat" description="HEAT 11" evidence="7">
    <location>
        <begin position="441"/>
        <end position="481"/>
    </location>
</feature>
<feature type="repeat" description="HEAT 12" evidence="7">
    <location>
        <begin position="484"/>
        <end position="524"/>
    </location>
</feature>
<feature type="repeat" description="HEAT 13" evidence="7">
    <location>
        <begin position="526"/>
        <end position="568"/>
    </location>
</feature>
<feature type="repeat" description="HEAT 14" evidence="7">
    <location>
        <begin position="571"/>
        <end position="613"/>
    </location>
</feature>
<feature type="repeat" description="HEAT 15" evidence="7">
    <location>
        <begin position="615"/>
        <end position="689"/>
    </location>
</feature>
<feature type="repeat" description="HEAT 16" evidence="7">
    <location>
        <begin position="692"/>
        <end position="735"/>
    </location>
</feature>
<feature type="repeat" description="HEAT 17" evidence="7">
    <location>
        <begin position="742"/>
        <end position="781"/>
    </location>
</feature>
<feature type="repeat" description="HEAT 18" evidence="7">
    <location>
        <begin position="788"/>
        <end position="849"/>
    </location>
</feature>
<feature type="repeat" description="HEAT 19" evidence="7">
    <location>
        <begin position="852"/>
        <end position="890"/>
    </location>
</feature>
<feature type="repeat" description="HEAT 20" evidence="7">
    <location>
        <begin position="898"/>
        <end position="930"/>
    </location>
</feature>
<feature type="repeat" description="HEAT 21" evidence="7">
    <location>
        <begin position="938"/>
        <end position="978"/>
    </location>
</feature>
<feature type="repeat" description="HEAT 22" evidence="7">
    <location>
        <begin position="986"/>
        <end position="1017"/>
    </location>
</feature>
<feature type="repeat" description="HEAT 23" evidence="7">
    <location>
        <begin position="1028"/>
        <end position="1063"/>
    </location>
</feature>
<feature type="repeat" description="HEAT 24" evidence="7">
    <location>
        <begin position="1066"/>
        <end position="1089"/>
    </location>
</feature>
<feature type="modified residue" description="N-acetylserine" evidence="17">
    <location>
        <position position="2"/>
    </location>
</feature>
<feature type="modified residue" description="Phosphothreonine" evidence="16">
    <location>
        <position position="830"/>
    </location>
</feature>
<feature type="sequence conflict" description="In Ref. 1; CAA77639/AAA10665." evidence="13" ref="1">
    <original>A</original>
    <variation>S</variation>
    <location>
        <position position="65"/>
    </location>
</feature>
<feature type="sequence conflict" description="In Ref. 1; CAA77639/AAA10665." evidence="13" ref="1">
    <original>P</original>
    <variation>A</variation>
    <location>
        <position position="1077"/>
    </location>
</feature>
<feature type="helix" evidence="19">
    <location>
        <begin position="6"/>
        <end position="18"/>
    </location>
</feature>
<feature type="helix" evidence="19">
    <location>
        <begin position="25"/>
        <end position="37"/>
    </location>
</feature>
<feature type="strand" evidence="20">
    <location>
        <begin position="38"/>
        <end position="40"/>
    </location>
</feature>
<feature type="turn" evidence="19">
    <location>
        <begin position="41"/>
        <end position="43"/>
    </location>
</feature>
<feature type="helix" evidence="19">
    <location>
        <begin position="44"/>
        <end position="57"/>
    </location>
</feature>
<feature type="helix" evidence="19">
    <location>
        <begin position="61"/>
        <end position="77"/>
    </location>
</feature>
<feature type="helix" evidence="19">
    <location>
        <begin position="91"/>
        <end position="93"/>
    </location>
</feature>
<feature type="helix" evidence="19">
    <location>
        <begin position="96"/>
        <end position="111"/>
    </location>
</feature>
<feature type="helix" evidence="19">
    <location>
        <begin position="116"/>
        <end position="127"/>
    </location>
</feature>
<feature type="strand" evidence="21">
    <location>
        <begin position="132"/>
        <end position="134"/>
    </location>
</feature>
<feature type="helix" evidence="19">
    <location>
        <begin position="138"/>
        <end position="149"/>
    </location>
</feature>
<feature type="helix" evidence="19">
    <location>
        <begin position="153"/>
        <end position="165"/>
    </location>
</feature>
<feature type="helix" evidence="19">
    <location>
        <begin position="168"/>
        <end position="172"/>
    </location>
</feature>
<feature type="helix" evidence="19">
    <location>
        <begin position="175"/>
        <end position="185"/>
    </location>
</feature>
<feature type="helix" evidence="19">
    <location>
        <begin position="191"/>
        <end position="207"/>
    </location>
</feature>
<feature type="helix" evidence="19">
    <location>
        <begin position="210"/>
        <end position="215"/>
    </location>
</feature>
<feature type="helix" evidence="19">
    <location>
        <begin position="217"/>
        <end position="219"/>
    </location>
</feature>
<feature type="helix" evidence="19">
    <location>
        <begin position="220"/>
        <end position="226"/>
    </location>
</feature>
<feature type="helix" evidence="19">
    <location>
        <begin position="228"/>
        <end position="232"/>
    </location>
</feature>
<feature type="helix" evidence="19">
    <location>
        <begin position="236"/>
        <end position="252"/>
    </location>
</feature>
<feature type="helix" evidence="19">
    <location>
        <begin position="254"/>
        <end position="260"/>
    </location>
</feature>
<feature type="helix" evidence="19">
    <location>
        <begin position="261"/>
        <end position="273"/>
    </location>
</feature>
<feature type="helix" evidence="19">
    <location>
        <begin position="279"/>
        <end position="295"/>
    </location>
</feature>
<feature type="helix" evidence="19">
    <location>
        <begin position="297"/>
        <end position="301"/>
    </location>
</feature>
<feature type="helix" evidence="19">
    <location>
        <begin position="304"/>
        <end position="318"/>
    </location>
</feature>
<feature type="helix" evidence="19">
    <location>
        <begin position="329"/>
        <end position="332"/>
    </location>
</feature>
<feature type="helix" evidence="19">
    <location>
        <begin position="343"/>
        <end position="359"/>
    </location>
</feature>
<feature type="helix" evidence="19">
    <location>
        <begin position="361"/>
        <end position="376"/>
    </location>
</feature>
<feature type="helix" evidence="19">
    <location>
        <begin position="381"/>
        <end position="394"/>
    </location>
</feature>
<feature type="turn" evidence="19">
    <location>
        <begin position="395"/>
        <end position="398"/>
    </location>
</feature>
<feature type="helix" evidence="19">
    <location>
        <begin position="399"/>
        <end position="402"/>
    </location>
</feature>
<feature type="helix" evidence="19">
    <location>
        <begin position="406"/>
        <end position="413"/>
    </location>
</feature>
<feature type="helix" evidence="19">
    <location>
        <begin position="414"/>
        <end position="418"/>
    </location>
</feature>
<feature type="helix" evidence="19">
    <location>
        <begin position="422"/>
        <end position="438"/>
    </location>
</feature>
<feature type="turn" evidence="19">
    <location>
        <begin position="439"/>
        <end position="441"/>
    </location>
</feature>
<feature type="helix" evidence="19">
    <location>
        <begin position="442"/>
        <end position="458"/>
    </location>
</feature>
<feature type="helix" evidence="19">
    <location>
        <begin position="465"/>
        <end position="480"/>
    </location>
</feature>
<feature type="helix" evidence="19">
    <location>
        <begin position="484"/>
        <end position="487"/>
    </location>
</feature>
<feature type="helix" evidence="19">
    <location>
        <begin position="488"/>
        <end position="490"/>
    </location>
</feature>
<feature type="helix" evidence="19">
    <location>
        <begin position="491"/>
        <end position="502"/>
    </location>
</feature>
<feature type="helix" evidence="19">
    <location>
        <begin position="507"/>
        <end position="524"/>
    </location>
</feature>
<feature type="helix" evidence="19">
    <location>
        <begin position="525"/>
        <end position="531"/>
    </location>
</feature>
<feature type="helix" evidence="19">
    <location>
        <begin position="532"/>
        <end position="544"/>
    </location>
</feature>
<feature type="helix" evidence="19">
    <location>
        <begin position="551"/>
        <end position="568"/>
    </location>
</feature>
<feature type="helix" evidence="19">
    <location>
        <begin position="570"/>
        <end position="573"/>
    </location>
</feature>
<feature type="turn" evidence="19">
    <location>
        <begin position="574"/>
        <end position="576"/>
    </location>
</feature>
<feature type="helix" evidence="19">
    <location>
        <begin position="577"/>
        <end position="588"/>
    </location>
</feature>
<feature type="helix" evidence="19">
    <location>
        <begin position="597"/>
        <end position="613"/>
    </location>
</feature>
<feature type="helix" evidence="19">
    <location>
        <begin position="614"/>
        <end position="620"/>
    </location>
</feature>
<feature type="helix" evidence="19">
    <location>
        <begin position="621"/>
        <end position="632"/>
    </location>
</feature>
<feature type="strand" evidence="19">
    <location>
        <begin position="638"/>
        <end position="641"/>
    </location>
</feature>
<feature type="strand" evidence="19">
    <location>
        <begin position="646"/>
        <end position="648"/>
    </location>
</feature>
<feature type="helix" evidence="19">
    <location>
        <begin position="649"/>
        <end position="651"/>
    </location>
</feature>
<feature type="strand" evidence="19">
    <location>
        <begin position="655"/>
        <end position="668"/>
    </location>
</feature>
<feature type="helix" evidence="19">
    <location>
        <begin position="669"/>
        <end position="689"/>
    </location>
</feature>
<feature type="helix" evidence="19">
    <location>
        <begin position="690"/>
        <end position="693"/>
    </location>
</feature>
<feature type="helix" evidence="19">
    <location>
        <begin position="694"/>
        <end position="703"/>
    </location>
</feature>
<feature type="helix" evidence="19">
    <location>
        <begin position="705"/>
        <end position="709"/>
    </location>
</feature>
<feature type="helix" evidence="19">
    <location>
        <begin position="715"/>
        <end position="734"/>
    </location>
</feature>
<feature type="helix" evidence="19">
    <location>
        <begin position="742"/>
        <end position="757"/>
    </location>
</feature>
<feature type="turn" evidence="19">
    <location>
        <begin position="758"/>
        <end position="760"/>
    </location>
</feature>
<feature type="helix" evidence="19">
    <location>
        <begin position="764"/>
        <end position="781"/>
    </location>
</feature>
<feature type="helix" evidence="19">
    <location>
        <begin position="788"/>
        <end position="809"/>
    </location>
</feature>
<feature type="helix" evidence="19">
    <location>
        <begin position="829"/>
        <end position="849"/>
    </location>
</feature>
<feature type="turn" evidence="19">
    <location>
        <begin position="850"/>
        <end position="853"/>
    </location>
</feature>
<feature type="helix" evidence="19">
    <location>
        <begin position="854"/>
        <end position="857"/>
    </location>
</feature>
<feature type="helix" evidence="19">
    <location>
        <begin position="858"/>
        <end position="860"/>
    </location>
</feature>
<feature type="helix" evidence="19">
    <location>
        <begin position="861"/>
        <end position="868"/>
    </location>
</feature>
<feature type="strand" evidence="21">
    <location>
        <begin position="870"/>
        <end position="872"/>
    </location>
</feature>
<feature type="helix" evidence="19">
    <location>
        <begin position="873"/>
        <end position="887"/>
    </location>
</feature>
<feature type="helix" evidence="18">
    <location>
        <begin position="891"/>
        <end position="893"/>
    </location>
</feature>
<feature type="helix" evidence="19">
    <location>
        <begin position="895"/>
        <end position="909"/>
    </location>
</feature>
<feature type="helix" evidence="19">
    <location>
        <begin position="914"/>
        <end position="930"/>
    </location>
</feature>
<feature type="turn" evidence="19">
    <location>
        <begin position="933"/>
        <end position="935"/>
    </location>
</feature>
<feature type="helix" evidence="19">
    <location>
        <begin position="936"/>
        <end position="949"/>
    </location>
</feature>
<feature type="helix" evidence="19">
    <location>
        <begin position="958"/>
        <end position="960"/>
    </location>
</feature>
<feature type="helix" evidence="19">
    <location>
        <begin position="961"/>
        <end position="977"/>
    </location>
</feature>
<feature type="turn" evidence="19">
    <location>
        <begin position="978"/>
        <end position="980"/>
    </location>
</feature>
<feature type="helix" evidence="19">
    <location>
        <begin position="987"/>
        <end position="993"/>
    </location>
</feature>
<feature type="helix" evidence="19">
    <location>
        <begin position="1002"/>
        <end position="1013"/>
    </location>
</feature>
<feature type="strand" evidence="21">
    <location>
        <begin position="1023"/>
        <end position="1027"/>
    </location>
</feature>
<feature type="helix" evidence="19">
    <location>
        <begin position="1029"/>
        <end position="1041"/>
    </location>
</feature>
<feature type="helix" evidence="19">
    <location>
        <begin position="1053"/>
        <end position="1062"/>
    </location>
</feature>
<feature type="helix" evidence="19">
    <location>
        <begin position="1066"/>
        <end position="1071"/>
    </location>
</feature>
<feature type="helix" evidence="19">
    <location>
        <begin position="1072"/>
        <end position="1075"/>
    </location>
</feature>
<feature type="helix" evidence="19">
    <location>
        <begin position="1078"/>
        <end position="1085"/>
    </location>
</feature>
<dbReference type="EMBL" id="Z11538">
    <property type="protein sequence ID" value="CAA77639.1"/>
    <property type="molecule type" value="Genomic_DNA"/>
</dbReference>
<dbReference type="EMBL" id="S45357">
    <property type="protein sequence ID" value="AAA10665.1"/>
    <property type="molecule type" value="Genomic_DNA"/>
</dbReference>
<dbReference type="EMBL" id="Z49212">
    <property type="protein sequence ID" value="CAA89141.1"/>
    <property type="molecule type" value="Genomic_DNA"/>
</dbReference>
<dbReference type="EMBL" id="BK006946">
    <property type="protein sequence ID" value="DAA10209.1"/>
    <property type="molecule type" value="Genomic_DNA"/>
</dbReference>
<dbReference type="PIR" id="S53978">
    <property type="entry name" value="S53978"/>
</dbReference>
<dbReference type="RefSeq" id="NP_014039.1">
    <property type="nucleotide sequence ID" value="NM_001182819.1"/>
</dbReference>
<dbReference type="PDB" id="3W3T">
    <property type="method" value="X-ray"/>
    <property type="resolution" value="2.90 A"/>
    <property type="chains" value="A=1-1089"/>
</dbReference>
<dbReference type="PDB" id="3W3U">
    <property type="method" value="X-ray"/>
    <property type="resolution" value="2.60 A"/>
    <property type="chains" value="A=1-1089"/>
</dbReference>
<dbReference type="PDB" id="3W3V">
    <property type="method" value="X-ray"/>
    <property type="resolution" value="3.20 A"/>
    <property type="chains" value="A=1-1089"/>
</dbReference>
<dbReference type="PDB" id="3W3W">
    <property type="method" value="X-ray"/>
    <property type="resolution" value="2.20 A"/>
    <property type="chains" value="A=1-1089"/>
</dbReference>
<dbReference type="PDB" id="3W3X">
    <property type="method" value="X-ray"/>
    <property type="resolution" value="2.90 A"/>
    <property type="chains" value="A=1-1089"/>
</dbReference>
<dbReference type="PDB" id="3W3Y">
    <property type="method" value="X-ray"/>
    <property type="resolution" value="2.80 A"/>
    <property type="chains" value="A=1-1089"/>
</dbReference>
<dbReference type="PDB" id="3W3Z">
    <property type="method" value="X-ray"/>
    <property type="resolution" value="2.70 A"/>
    <property type="chains" value="A=1-1089"/>
</dbReference>
<dbReference type="PDB" id="4ZJ7">
    <property type="method" value="X-ray"/>
    <property type="resolution" value="2.40 A"/>
    <property type="chains" value="A=1-1089"/>
</dbReference>
<dbReference type="PDB" id="5H2V">
    <property type="method" value="X-ray"/>
    <property type="resolution" value="2.80 A"/>
    <property type="chains" value="A=1-1089"/>
</dbReference>
<dbReference type="PDBsum" id="3W3T"/>
<dbReference type="PDBsum" id="3W3U"/>
<dbReference type="PDBsum" id="3W3V"/>
<dbReference type="PDBsum" id="3W3W"/>
<dbReference type="PDBsum" id="3W3X"/>
<dbReference type="PDBsum" id="3W3Y"/>
<dbReference type="PDBsum" id="3W3Z"/>
<dbReference type="PDBsum" id="4ZJ7"/>
<dbReference type="PDBsum" id="5H2V"/>
<dbReference type="SMR" id="P32337"/>
<dbReference type="BioGRID" id="35488">
    <property type="interactions" value="269"/>
</dbReference>
<dbReference type="DIP" id="DIP-1533N"/>
<dbReference type="FunCoup" id="P32337">
    <property type="interactions" value="1368"/>
</dbReference>
<dbReference type="IntAct" id="P32337">
    <property type="interactions" value="91"/>
</dbReference>
<dbReference type="MINT" id="P32337"/>
<dbReference type="STRING" id="4932.YMR308C"/>
<dbReference type="iPTMnet" id="P32337"/>
<dbReference type="PaxDb" id="4932-YMR308C"/>
<dbReference type="PeptideAtlas" id="P32337"/>
<dbReference type="EnsemblFungi" id="YMR308C_mRNA">
    <property type="protein sequence ID" value="YMR308C"/>
    <property type="gene ID" value="YMR308C"/>
</dbReference>
<dbReference type="GeneID" id="855356"/>
<dbReference type="KEGG" id="sce:YMR308C"/>
<dbReference type="AGR" id="SGD:S000004925"/>
<dbReference type="SGD" id="S000004925">
    <property type="gene designation" value="PSE1"/>
</dbReference>
<dbReference type="VEuPathDB" id="FungiDB:YMR308C"/>
<dbReference type="eggNOG" id="KOG2171">
    <property type="taxonomic scope" value="Eukaryota"/>
</dbReference>
<dbReference type="GeneTree" id="ENSGT00940000169161"/>
<dbReference type="HOGENOM" id="CLU_003794_0_1_1"/>
<dbReference type="InParanoid" id="P32337"/>
<dbReference type="OMA" id="PKRFVQE"/>
<dbReference type="OrthoDB" id="543373at2759"/>
<dbReference type="BioCyc" id="YEAST:G3O-32972-MONOMER"/>
<dbReference type="BioGRID-ORCS" id="855356">
    <property type="hits" value="9 hits in 10 CRISPR screens"/>
</dbReference>
<dbReference type="CD-CODE" id="21A3CED6">
    <property type="entry name" value="Synthetic Condensate 000267"/>
</dbReference>
<dbReference type="CD-CODE" id="9C0C01E2">
    <property type="entry name" value="Synthetic Condensate 000254"/>
</dbReference>
<dbReference type="EvolutionaryTrace" id="P32337"/>
<dbReference type="PRO" id="PR:P32337"/>
<dbReference type="Proteomes" id="UP000002311">
    <property type="component" value="Chromosome XIII"/>
</dbReference>
<dbReference type="RNAct" id="P32337">
    <property type="molecule type" value="protein"/>
</dbReference>
<dbReference type="GO" id="GO:0005737">
    <property type="term" value="C:cytoplasm"/>
    <property type="evidence" value="ECO:0000314"/>
    <property type="project" value="SGD"/>
</dbReference>
<dbReference type="GO" id="GO:0005634">
    <property type="term" value="C:nucleus"/>
    <property type="evidence" value="ECO:0000314"/>
    <property type="project" value="SGD"/>
</dbReference>
<dbReference type="GO" id="GO:0061608">
    <property type="term" value="F:nuclear import signal receptor activity"/>
    <property type="evidence" value="ECO:0000315"/>
    <property type="project" value="SGD"/>
</dbReference>
<dbReference type="GO" id="GO:0008139">
    <property type="term" value="F:nuclear localization sequence binding"/>
    <property type="evidence" value="ECO:0000314"/>
    <property type="project" value="SGD"/>
</dbReference>
<dbReference type="GO" id="GO:0006406">
    <property type="term" value="P:mRNA export from nucleus"/>
    <property type="evidence" value="ECO:0000316"/>
    <property type="project" value="SGD"/>
</dbReference>
<dbReference type="GO" id="GO:0006606">
    <property type="term" value="P:protein import into nucleus"/>
    <property type="evidence" value="ECO:0000315"/>
    <property type="project" value="SGD"/>
</dbReference>
<dbReference type="GO" id="GO:0007088">
    <property type="term" value="P:regulation of mitotic nuclear division"/>
    <property type="evidence" value="ECO:0000315"/>
    <property type="project" value="SGD"/>
</dbReference>
<dbReference type="GO" id="GO:0060188">
    <property type="term" value="P:regulation of protein desumoylation"/>
    <property type="evidence" value="ECO:0000315"/>
    <property type="project" value="SGD"/>
</dbReference>
<dbReference type="DisProt" id="DP02144"/>
<dbReference type="Gene3D" id="6.10.140.1700">
    <property type="match status" value="1"/>
</dbReference>
<dbReference type="Gene3D" id="1.25.10.10">
    <property type="entry name" value="Leucine-rich Repeat Variant"/>
    <property type="match status" value="1"/>
</dbReference>
<dbReference type="InterPro" id="IPR011989">
    <property type="entry name" value="ARM-like"/>
</dbReference>
<dbReference type="InterPro" id="IPR016024">
    <property type="entry name" value="ARM-type_fold"/>
</dbReference>
<dbReference type="InterPro" id="IPR040122">
    <property type="entry name" value="Importin_beta"/>
</dbReference>
<dbReference type="InterPro" id="IPR041653">
    <property type="entry name" value="Importin_rep_4"/>
</dbReference>
<dbReference type="InterPro" id="IPR040928">
    <property type="entry name" value="Importin_rep_5"/>
</dbReference>
<dbReference type="InterPro" id="IPR041389">
    <property type="entry name" value="Importin_rep_6"/>
</dbReference>
<dbReference type="PANTHER" id="PTHR10527">
    <property type="entry name" value="IMPORTIN BETA"/>
    <property type="match status" value="1"/>
</dbReference>
<dbReference type="Pfam" id="PF13513">
    <property type="entry name" value="HEAT_EZ"/>
    <property type="match status" value="2"/>
</dbReference>
<dbReference type="Pfam" id="PF18808">
    <property type="entry name" value="Importin_rep_4"/>
    <property type="match status" value="1"/>
</dbReference>
<dbReference type="Pfam" id="PF18816">
    <property type="entry name" value="Importin_rep_5"/>
    <property type="match status" value="1"/>
</dbReference>
<dbReference type="Pfam" id="PF18829">
    <property type="entry name" value="Importin_rep_6"/>
    <property type="match status" value="1"/>
</dbReference>
<dbReference type="SUPFAM" id="SSF48371">
    <property type="entry name" value="ARM repeat"/>
    <property type="match status" value="1"/>
</dbReference>